<reference key="1">
    <citation type="journal article" date="2004" name="Nat. Genet.">
        <title>Complete sequencing and characterization of 21,243 full-length human cDNAs.</title>
        <authorList>
            <person name="Ota T."/>
            <person name="Suzuki Y."/>
            <person name="Nishikawa T."/>
            <person name="Otsuki T."/>
            <person name="Sugiyama T."/>
            <person name="Irie R."/>
            <person name="Wakamatsu A."/>
            <person name="Hayashi K."/>
            <person name="Sato H."/>
            <person name="Nagai K."/>
            <person name="Kimura K."/>
            <person name="Makita H."/>
            <person name="Sekine M."/>
            <person name="Obayashi M."/>
            <person name="Nishi T."/>
            <person name="Shibahara T."/>
            <person name="Tanaka T."/>
            <person name="Ishii S."/>
            <person name="Yamamoto J."/>
            <person name="Saito K."/>
            <person name="Kawai Y."/>
            <person name="Isono Y."/>
            <person name="Nakamura Y."/>
            <person name="Nagahari K."/>
            <person name="Murakami K."/>
            <person name="Yasuda T."/>
            <person name="Iwayanagi T."/>
            <person name="Wagatsuma M."/>
            <person name="Shiratori A."/>
            <person name="Sudo H."/>
            <person name="Hosoiri T."/>
            <person name="Kaku Y."/>
            <person name="Kodaira H."/>
            <person name="Kondo H."/>
            <person name="Sugawara M."/>
            <person name="Takahashi M."/>
            <person name="Kanda K."/>
            <person name="Yokoi T."/>
            <person name="Furuya T."/>
            <person name="Kikkawa E."/>
            <person name="Omura Y."/>
            <person name="Abe K."/>
            <person name="Kamihara K."/>
            <person name="Katsuta N."/>
            <person name="Sato K."/>
            <person name="Tanikawa M."/>
            <person name="Yamazaki M."/>
            <person name="Ninomiya K."/>
            <person name="Ishibashi T."/>
            <person name="Yamashita H."/>
            <person name="Murakawa K."/>
            <person name="Fujimori K."/>
            <person name="Tanai H."/>
            <person name="Kimata M."/>
            <person name="Watanabe M."/>
            <person name="Hiraoka S."/>
            <person name="Chiba Y."/>
            <person name="Ishida S."/>
            <person name="Ono Y."/>
            <person name="Takiguchi S."/>
            <person name="Watanabe S."/>
            <person name="Yosida M."/>
            <person name="Hotuta T."/>
            <person name="Kusano J."/>
            <person name="Kanehori K."/>
            <person name="Takahashi-Fujii A."/>
            <person name="Hara H."/>
            <person name="Tanase T.-O."/>
            <person name="Nomura Y."/>
            <person name="Togiya S."/>
            <person name="Komai F."/>
            <person name="Hara R."/>
            <person name="Takeuchi K."/>
            <person name="Arita M."/>
            <person name="Imose N."/>
            <person name="Musashino K."/>
            <person name="Yuuki H."/>
            <person name="Oshima A."/>
            <person name="Sasaki N."/>
            <person name="Aotsuka S."/>
            <person name="Yoshikawa Y."/>
            <person name="Matsunawa H."/>
            <person name="Ichihara T."/>
            <person name="Shiohata N."/>
            <person name="Sano S."/>
            <person name="Moriya S."/>
            <person name="Momiyama H."/>
            <person name="Satoh N."/>
            <person name="Takami S."/>
            <person name="Terashima Y."/>
            <person name="Suzuki O."/>
            <person name="Nakagawa S."/>
            <person name="Senoh A."/>
            <person name="Mizoguchi H."/>
            <person name="Goto Y."/>
            <person name="Shimizu F."/>
            <person name="Wakebe H."/>
            <person name="Hishigaki H."/>
            <person name="Watanabe T."/>
            <person name="Sugiyama A."/>
            <person name="Takemoto M."/>
            <person name="Kawakami B."/>
            <person name="Yamazaki M."/>
            <person name="Watanabe K."/>
            <person name="Kumagai A."/>
            <person name="Itakura S."/>
            <person name="Fukuzumi Y."/>
            <person name="Fujimori Y."/>
            <person name="Komiyama M."/>
            <person name="Tashiro H."/>
            <person name="Tanigami A."/>
            <person name="Fujiwara T."/>
            <person name="Ono T."/>
            <person name="Yamada K."/>
            <person name="Fujii Y."/>
            <person name="Ozaki K."/>
            <person name="Hirao M."/>
            <person name="Ohmori Y."/>
            <person name="Kawabata A."/>
            <person name="Hikiji T."/>
            <person name="Kobatake N."/>
            <person name="Inagaki H."/>
            <person name="Ikema Y."/>
            <person name="Okamoto S."/>
            <person name="Okitani R."/>
            <person name="Kawakami T."/>
            <person name="Noguchi S."/>
            <person name="Itoh T."/>
            <person name="Shigeta K."/>
            <person name="Senba T."/>
            <person name="Matsumura K."/>
            <person name="Nakajima Y."/>
            <person name="Mizuno T."/>
            <person name="Morinaga M."/>
            <person name="Sasaki M."/>
            <person name="Togashi T."/>
            <person name="Oyama M."/>
            <person name="Hata H."/>
            <person name="Watanabe M."/>
            <person name="Komatsu T."/>
            <person name="Mizushima-Sugano J."/>
            <person name="Satoh T."/>
            <person name="Shirai Y."/>
            <person name="Takahashi Y."/>
            <person name="Nakagawa K."/>
            <person name="Okumura K."/>
            <person name="Nagase T."/>
            <person name="Nomura N."/>
            <person name="Kikuchi H."/>
            <person name="Masuho Y."/>
            <person name="Yamashita R."/>
            <person name="Nakai K."/>
            <person name="Yada T."/>
            <person name="Nakamura Y."/>
            <person name="Ohara O."/>
            <person name="Isogai T."/>
            <person name="Sugano S."/>
        </authorList>
    </citation>
    <scope>NUCLEOTIDE SEQUENCE [LARGE SCALE MRNA] (ISOFORMS 1; 2 AND 3)</scope>
    <source>
        <tissue>Teratocarcinoma</tissue>
        <tissue>Testis</tissue>
        <tissue>Thymus</tissue>
    </source>
</reference>
<reference key="2">
    <citation type="submission" date="2007-02" db="EMBL/GenBank/DDBJ databases">
        <authorList>
            <consortium name="NHLBI resequencing and genotyping service (RS&amp;G)"/>
        </authorList>
    </citation>
    <scope>NUCLEOTIDE SEQUENCE [GENOMIC DNA]</scope>
</reference>
<reference key="3">
    <citation type="journal article" date="2005" name="Nature">
        <title>DNA sequence and analysis of human chromosome 18.</title>
        <authorList>
            <person name="Nusbaum C."/>
            <person name="Zody M.C."/>
            <person name="Borowsky M.L."/>
            <person name="Kamal M."/>
            <person name="Kodira C.D."/>
            <person name="Taylor T.D."/>
            <person name="Whittaker C.A."/>
            <person name="Chang J.L."/>
            <person name="Cuomo C.A."/>
            <person name="Dewar K."/>
            <person name="FitzGerald M.G."/>
            <person name="Yang X."/>
            <person name="Abouelleil A."/>
            <person name="Allen N.R."/>
            <person name="Anderson S."/>
            <person name="Bloom T."/>
            <person name="Bugalter B."/>
            <person name="Butler J."/>
            <person name="Cook A."/>
            <person name="DeCaprio D."/>
            <person name="Engels R."/>
            <person name="Garber M."/>
            <person name="Gnirke A."/>
            <person name="Hafez N."/>
            <person name="Hall J.L."/>
            <person name="Norman C.H."/>
            <person name="Itoh T."/>
            <person name="Jaffe D.B."/>
            <person name="Kuroki Y."/>
            <person name="Lehoczky J."/>
            <person name="Lui A."/>
            <person name="Macdonald P."/>
            <person name="Mauceli E."/>
            <person name="Mikkelsen T.S."/>
            <person name="Naylor J.W."/>
            <person name="Nicol R."/>
            <person name="Nguyen C."/>
            <person name="Noguchi H."/>
            <person name="O'Leary S.B."/>
            <person name="Piqani B."/>
            <person name="Smith C.L."/>
            <person name="Talamas J.A."/>
            <person name="Topham K."/>
            <person name="Totoki Y."/>
            <person name="Toyoda A."/>
            <person name="Wain H.M."/>
            <person name="Young S.K."/>
            <person name="Zeng Q."/>
            <person name="Zimmer A.R."/>
            <person name="Fujiyama A."/>
            <person name="Hattori M."/>
            <person name="Birren B.W."/>
            <person name="Sakaki Y."/>
            <person name="Lander E.S."/>
        </authorList>
    </citation>
    <scope>NUCLEOTIDE SEQUENCE [LARGE SCALE GENOMIC DNA]</scope>
</reference>
<reference key="4">
    <citation type="submission" date="2005-09" db="EMBL/GenBank/DDBJ databases">
        <authorList>
            <person name="Mural R.J."/>
            <person name="Istrail S."/>
            <person name="Sutton G.G."/>
            <person name="Florea L."/>
            <person name="Halpern A.L."/>
            <person name="Mobarry C.M."/>
            <person name="Lippert R."/>
            <person name="Walenz B."/>
            <person name="Shatkay H."/>
            <person name="Dew I."/>
            <person name="Miller J.R."/>
            <person name="Flanigan M.J."/>
            <person name="Edwards N.J."/>
            <person name="Bolanos R."/>
            <person name="Fasulo D."/>
            <person name="Halldorsson B.V."/>
            <person name="Hannenhalli S."/>
            <person name="Turner R."/>
            <person name="Yooseph S."/>
            <person name="Lu F."/>
            <person name="Nusskern D.R."/>
            <person name="Shue B.C."/>
            <person name="Zheng X.H."/>
            <person name="Zhong F."/>
            <person name="Delcher A.L."/>
            <person name="Huson D.H."/>
            <person name="Kravitz S.A."/>
            <person name="Mouchard L."/>
            <person name="Reinert K."/>
            <person name="Remington K.A."/>
            <person name="Clark A.G."/>
            <person name="Waterman M.S."/>
            <person name="Eichler E.E."/>
            <person name="Adams M.D."/>
            <person name="Hunkapiller M.W."/>
            <person name="Myers E.W."/>
            <person name="Venter J.C."/>
        </authorList>
    </citation>
    <scope>NUCLEOTIDE SEQUENCE [LARGE SCALE GENOMIC DNA]</scope>
</reference>
<reference key="5">
    <citation type="journal article" date="2004" name="Genome Res.">
        <title>The status, quality, and expansion of the NIH full-length cDNA project: the Mammalian Gene Collection (MGC).</title>
        <authorList>
            <consortium name="The MGC Project Team"/>
        </authorList>
    </citation>
    <scope>NUCLEOTIDE SEQUENCE [LARGE SCALE MRNA] (ISOFORM 1)</scope>
    <source>
        <tissue>Brain</tissue>
    </source>
</reference>
<reference key="6">
    <citation type="journal article" date="2007" name="BMC Genomics">
        <title>The full-ORF clone resource of the German cDNA consortium.</title>
        <authorList>
            <person name="Bechtel S."/>
            <person name="Rosenfelder H."/>
            <person name="Duda A."/>
            <person name="Schmidt C.P."/>
            <person name="Ernst U."/>
            <person name="Wellenreuther R."/>
            <person name="Mehrle A."/>
            <person name="Schuster C."/>
            <person name="Bahr A."/>
            <person name="Bloecker H."/>
            <person name="Heubner D."/>
            <person name="Hoerlein A."/>
            <person name="Michel G."/>
            <person name="Wedler H."/>
            <person name="Koehrer K."/>
            <person name="Ottenwaelder B."/>
            <person name="Poustka A."/>
            <person name="Wiemann S."/>
            <person name="Schupp I."/>
        </authorList>
    </citation>
    <scope>NUCLEOTIDE SEQUENCE [LARGE SCALE MRNA] OF 1-73</scope>
    <source>
        <tissue>Stomach</tissue>
    </source>
</reference>
<reference key="7">
    <citation type="journal article" date="2003" name="Nature">
        <title>Proteomic characterization of the human centrosome by protein correlation profiling.</title>
        <authorList>
            <person name="Andersen J.S."/>
            <person name="Wilkinson C.J."/>
            <person name="Mayor T."/>
            <person name="Mortensen P."/>
            <person name="Nigg E.A."/>
            <person name="Mann M."/>
        </authorList>
    </citation>
    <scope>IDENTIFICATION BY MASS SPECTROMETRY</scope>
    <scope>SUBCELLULAR LOCATION [LARGE SCALE ANALYSIS]</scope>
    <source>
        <tissue>Lymphoblast</tissue>
    </source>
</reference>
<reference key="8">
    <citation type="journal article" date="2008" name="Mol. Cell">
        <title>Kinase-selective enrichment enables quantitative phosphoproteomics of the kinome across the cell cycle.</title>
        <authorList>
            <person name="Daub H."/>
            <person name="Olsen J.V."/>
            <person name="Bairlein M."/>
            <person name="Gnad F."/>
            <person name="Oppermann F.S."/>
            <person name="Korner R."/>
            <person name="Greff Z."/>
            <person name="Keri G."/>
            <person name="Stemmann O."/>
            <person name="Mann M."/>
        </authorList>
    </citation>
    <scope>IDENTIFICATION BY MASS SPECTROMETRY [LARGE SCALE ANALYSIS]</scope>
    <source>
        <tissue>Cervix carcinoma</tissue>
    </source>
</reference>
<reference key="9">
    <citation type="journal article" date="2008" name="Proc. Natl. Acad. Sci. U.S.A.">
        <title>A quantitative atlas of mitotic phosphorylation.</title>
        <authorList>
            <person name="Dephoure N."/>
            <person name="Zhou C."/>
            <person name="Villen J."/>
            <person name="Beausoleil S.A."/>
            <person name="Bakalarski C.E."/>
            <person name="Elledge S.J."/>
            <person name="Gygi S.P."/>
        </authorList>
    </citation>
    <scope>PHOSPHORYLATION [LARGE SCALE ANALYSIS] AT SER-83</scope>
    <scope>IDENTIFICATION BY MASS SPECTROMETRY [LARGE SCALE ANALYSIS]</scope>
    <source>
        <tissue>Cervix carcinoma</tissue>
    </source>
</reference>
<reference key="10">
    <citation type="journal article" date="2009" name="Dev. Cell">
        <title>Cep76, a centrosomal protein that specifically restrains centriole reduplication.</title>
        <authorList>
            <person name="Tsang W.Y."/>
            <person name="Spektor A."/>
            <person name="Vijayakumar S."/>
            <person name="Bista B.R."/>
            <person name="Li J."/>
            <person name="Sanchez I."/>
            <person name="Duensing S."/>
            <person name="Dynlacht B.D."/>
        </authorList>
    </citation>
    <scope>FUNCTION</scope>
    <scope>SUBCELLULAR LOCATION</scope>
    <scope>DEVELOPMENTAL STAGE</scope>
    <scope>INTERACTION WITH CCP110 AND CEP97</scope>
</reference>
<reference key="11">
    <citation type="journal article" date="2009" name="Sci. Signal.">
        <title>Quantitative phosphoproteomic analysis of T cell receptor signaling reveals system-wide modulation of protein-protein interactions.</title>
        <authorList>
            <person name="Mayya V."/>
            <person name="Lundgren D.H."/>
            <person name="Hwang S.-I."/>
            <person name="Rezaul K."/>
            <person name="Wu L."/>
            <person name="Eng J.K."/>
            <person name="Rodionov V."/>
            <person name="Han D.K."/>
        </authorList>
    </citation>
    <scope>PHOSPHORYLATION [LARGE SCALE ANALYSIS] AT SER-83</scope>
    <scope>IDENTIFICATION BY MASS SPECTROMETRY [LARGE SCALE ANALYSIS]</scope>
    <source>
        <tissue>Leukemic T-cell</tissue>
    </source>
</reference>
<evidence type="ECO:0000250" key="1">
    <source>
        <dbReference type="UniProtKB" id="Q0VEJ0"/>
    </source>
</evidence>
<evidence type="ECO:0000269" key="2">
    <source>
    </source>
</evidence>
<evidence type="ECO:0000269" key="3">
    <source>
    </source>
</evidence>
<evidence type="ECO:0000303" key="4">
    <source>
    </source>
</evidence>
<evidence type="ECO:0000305" key="5"/>
<evidence type="ECO:0007744" key="6">
    <source>
    </source>
</evidence>
<evidence type="ECO:0007744" key="7">
    <source>
    </source>
</evidence>
<organism>
    <name type="scientific">Homo sapiens</name>
    <name type="common">Human</name>
    <dbReference type="NCBI Taxonomy" id="9606"/>
    <lineage>
        <taxon>Eukaryota</taxon>
        <taxon>Metazoa</taxon>
        <taxon>Chordata</taxon>
        <taxon>Craniata</taxon>
        <taxon>Vertebrata</taxon>
        <taxon>Euteleostomi</taxon>
        <taxon>Mammalia</taxon>
        <taxon>Eutheria</taxon>
        <taxon>Euarchontoglires</taxon>
        <taxon>Primates</taxon>
        <taxon>Haplorrhini</taxon>
        <taxon>Catarrhini</taxon>
        <taxon>Hominidae</taxon>
        <taxon>Homo</taxon>
    </lineage>
</organism>
<proteinExistence type="evidence at protein level"/>
<name>CEP76_HUMAN</name>
<comment type="function">
    <text evidence="3">Centrosomal protein involved in regulation of centriole duplication. Required to limit centriole duplication to once per cell cycle by preventing centriole reduplication.</text>
</comment>
<comment type="subunit">
    <text evidence="3">Interacts with CCP110 and CEP97.</text>
</comment>
<comment type="interaction">
    <interactant intactId="EBI-742887">
        <id>Q8TAP6</id>
    </interactant>
    <interactant intactId="EBI-10185182">
        <id>O43687-2</id>
        <label>AKAP7</label>
    </interactant>
    <organismsDiffer>false</organismsDiffer>
    <experiments>6</experiments>
</comment>
<comment type="interaction">
    <interactant intactId="EBI-742887">
        <id>Q8TAP6</id>
    </interactant>
    <interactant intactId="EBI-296087">
        <id>P31749</id>
        <label>AKT1</label>
    </interactant>
    <organismsDiffer>false</organismsDiffer>
    <experiments>3</experiments>
</comment>
<comment type="interaction">
    <interactant intactId="EBI-742887">
        <id>Q8TAP6</id>
    </interactant>
    <interactant intactId="EBI-14100900">
        <id>A1A5B0</id>
        <label>ANKRD36</label>
    </interactant>
    <organismsDiffer>false</organismsDiffer>
    <experiments>3</experiments>
</comment>
<comment type="interaction">
    <interactant intactId="EBI-742887">
        <id>Q8TAP6</id>
    </interactant>
    <interactant intactId="EBI-540797">
        <id>Q9UBL3</id>
        <label>ASH2L</label>
    </interactant>
    <organismsDiffer>false</organismsDiffer>
    <experiments>3</experiments>
</comment>
<comment type="interaction">
    <interactant intactId="EBI-742887">
        <id>Q8TAP6</id>
    </interactant>
    <interactant intactId="EBI-16429704">
        <id>A0A0S2Z5G4</id>
        <label>BANP</label>
    </interactant>
    <organismsDiffer>false</organismsDiffer>
    <experiments>3</experiments>
</comment>
<comment type="interaction">
    <interactant intactId="EBI-742887">
        <id>Q8TAP6</id>
    </interactant>
    <interactant intactId="EBI-16429313">
        <id>B4DE54</id>
        <label>BANP</label>
    </interactant>
    <organismsDiffer>false</organismsDiffer>
    <experiments>3</experiments>
</comment>
<comment type="interaction">
    <interactant intactId="EBI-742887">
        <id>Q8TAP6</id>
    </interactant>
    <interactant intactId="EBI-744695">
        <id>Q8N9N5</id>
        <label>BANP</label>
    </interactant>
    <organismsDiffer>false</organismsDiffer>
    <experiments>3</experiments>
</comment>
<comment type="interaction">
    <interactant intactId="EBI-742887">
        <id>Q8TAP6</id>
    </interactant>
    <interactant intactId="EBI-11524452">
        <id>Q8N9N5-2</id>
        <label>BANP</label>
    </interactant>
    <organismsDiffer>false</organismsDiffer>
    <experiments>3</experiments>
</comment>
<comment type="interaction">
    <interactant intactId="EBI-742887">
        <id>Q8TAP6</id>
    </interactant>
    <interactant intactId="EBI-16429296">
        <id>Q8N9N5-7</id>
        <label>BANP</label>
    </interactant>
    <organismsDiffer>false</organismsDiffer>
    <experiments>3</experiments>
</comment>
<comment type="interaction">
    <interactant intactId="EBI-742887">
        <id>Q8TAP6</id>
    </interactant>
    <interactant intactId="EBI-7317823">
        <id>Q6P5X5</id>
        <label>C22orf39</label>
    </interactant>
    <organismsDiffer>false</organismsDiffer>
    <experiments>6</experiments>
</comment>
<comment type="interaction">
    <interactant intactId="EBI-742887">
        <id>Q8TAP6</id>
    </interactant>
    <interactant intactId="EBI-10311131">
        <id>Q9NP86</id>
        <label>CABP5</label>
    </interactant>
    <organismsDiffer>false</organismsDiffer>
    <experiments>8</experiments>
</comment>
<comment type="interaction">
    <interactant intactId="EBI-742887">
        <id>Q8TAP6</id>
    </interactant>
    <interactant intactId="EBI-1184651">
        <id>P54284</id>
        <label>CACNB3</label>
    </interactant>
    <organismsDiffer>false</organismsDiffer>
    <experiments>3</experiments>
</comment>
<comment type="interaction">
    <interactant intactId="EBI-742887">
        <id>Q8TAP6</id>
    </interactant>
    <interactant intactId="EBI-16430532">
        <id>A0A0S2Z3E6</id>
        <label>CAPN3</label>
    </interactant>
    <organismsDiffer>false</organismsDiffer>
    <experiments>3</experiments>
</comment>
<comment type="interaction">
    <interactant intactId="EBI-742887">
        <id>Q8TAP6</id>
    </interactant>
    <interactant intactId="EBI-3893101">
        <id>Q969G5</id>
        <label>CAVIN3</label>
    </interactant>
    <organismsDiffer>false</organismsDiffer>
    <experiments>3</experiments>
</comment>
<comment type="interaction">
    <interactant intactId="EBI-742887">
        <id>Q8TAP6</id>
    </interactant>
    <interactant intactId="EBI-719994">
        <id>Q53HC0</id>
        <label>CCDC92</label>
    </interactant>
    <organismsDiffer>false</organismsDiffer>
    <experiments>3</experiments>
</comment>
<comment type="interaction">
    <interactant intactId="EBI-742887">
        <id>Q8TAP6</id>
    </interactant>
    <interactant intactId="EBI-746238">
        <id>Q07002</id>
        <label>CDK18</label>
    </interactant>
    <organismsDiffer>false</organismsDiffer>
    <experiments>3</experiments>
</comment>
<comment type="interaction">
    <interactant intactId="EBI-742887">
        <id>Q8TAP6</id>
    </interactant>
    <interactant intactId="EBI-11085153">
        <id>Q92674</id>
        <label>CENPI</label>
    </interactant>
    <organismsDiffer>false</organismsDiffer>
    <experiments>3</experiments>
</comment>
<comment type="interaction">
    <interactant intactId="EBI-742887">
        <id>Q8TAP6</id>
    </interactant>
    <interactant intactId="EBI-627102">
        <id>Q86X95</id>
        <label>CIR1</label>
    </interactant>
    <organismsDiffer>false</organismsDiffer>
    <experiments>3</experiments>
</comment>
<comment type="interaction">
    <interactant intactId="EBI-742887">
        <id>Q8TAP6</id>
    </interactant>
    <interactant intactId="EBI-7519711">
        <id>P53673</id>
        <label>CRYBA4</label>
    </interactant>
    <organismsDiffer>false</organismsDiffer>
    <experiments>9</experiments>
</comment>
<comment type="interaction">
    <interactant intactId="EBI-742887">
        <id>Q8TAP6</id>
    </interactant>
    <interactant intactId="EBI-1383814">
        <id>Q9HCP0</id>
        <label>CSNK1G1</label>
    </interactant>
    <organismsDiffer>false</organismsDiffer>
    <experiments>3</experiments>
</comment>
<comment type="interaction">
    <interactant intactId="EBI-742887">
        <id>Q8TAP6</id>
    </interactant>
    <interactant intactId="EBI-714918">
        <id>Q9NTM9</id>
        <label>CUTC</label>
    </interactant>
    <organismsDiffer>false</organismsDiffer>
    <experiments>3</experiments>
</comment>
<comment type="interaction">
    <interactant intactId="EBI-742887">
        <id>Q8TAP6</id>
    </interactant>
    <interactant intactId="EBI-5453285">
        <id>Q2TBE0</id>
        <label>CWF19L2</label>
    </interactant>
    <organismsDiffer>false</organismsDiffer>
    <experiments>3</experiments>
</comment>
<comment type="interaction">
    <interactant intactId="EBI-742887">
        <id>Q8TAP6</id>
    </interactant>
    <interactant intactId="EBI-351257">
        <id>P26196</id>
        <label>DDX6</label>
    </interactant>
    <organismsDiffer>false</organismsDiffer>
    <experiments>3</experiments>
</comment>
<comment type="interaction">
    <interactant intactId="EBI-742887">
        <id>Q8TAP6</id>
    </interactant>
    <interactant intactId="EBI-718185">
        <id>O75398</id>
        <label>DEAF1</label>
    </interactant>
    <organismsDiffer>false</organismsDiffer>
    <experiments>3</experiments>
</comment>
<comment type="interaction">
    <interactant intactId="EBI-742887">
        <id>Q8TAP6</id>
    </interactant>
    <interactant intactId="EBI-715275">
        <id>Q08495</id>
        <label>DMTN</label>
    </interactant>
    <organismsDiffer>false</organismsDiffer>
    <experiments>3</experiments>
</comment>
<comment type="interaction">
    <interactant intactId="EBI-742887">
        <id>Q8TAP6</id>
    </interactant>
    <interactant intactId="EBI-739789">
        <id>Q92997</id>
        <label>DVL3</label>
    </interactant>
    <organismsDiffer>false</organismsDiffer>
    <experiments>3</experiments>
</comment>
<comment type="interaction">
    <interactant intactId="EBI-742887">
        <id>Q8TAP6</id>
    </interactant>
    <interactant intactId="EBI-10264440">
        <id>Q8IYY4</id>
        <label>DZIP1L</label>
    </interactant>
    <organismsDiffer>false</organismsDiffer>
    <experiments>5</experiments>
</comment>
<comment type="interaction">
    <interactant intactId="EBI-742887">
        <id>Q8TAP6</id>
    </interactant>
    <interactant intactId="EBI-769261">
        <id>Q96JC9</id>
        <label>EAF1</label>
    </interactant>
    <organismsDiffer>false</organismsDiffer>
    <experiments>3</experiments>
</comment>
<comment type="interaction">
    <interactant intactId="EBI-742887">
        <id>Q8TAP6</id>
    </interactant>
    <interactant intactId="EBI-750700">
        <id>Q8N9N8</id>
        <label>EIF1AD</label>
    </interactant>
    <organismsDiffer>false</organismsDiffer>
    <experiments>3</experiments>
</comment>
<comment type="interaction">
    <interactant intactId="EBI-742887">
        <id>Q8TAP6</id>
    </interactant>
    <interactant intactId="EBI-1183307">
        <id>P19447</id>
        <label>ERCC3</label>
    </interactant>
    <organismsDiffer>false</organismsDiffer>
    <experiments>3</experiments>
</comment>
<comment type="interaction">
    <interactant intactId="EBI-742887">
        <id>Q8TAP6</id>
    </interactant>
    <interactant intactId="EBI-6658203">
        <id>Q86YD7</id>
        <label>FAM90A1</label>
    </interactant>
    <organismsDiffer>false</organismsDiffer>
    <experiments>6</experiments>
</comment>
<comment type="interaction">
    <interactant intactId="EBI-742887">
        <id>Q8TAP6</id>
    </interactant>
    <interactant intactId="EBI-10226858">
        <id>Q0VDC6</id>
        <label>FKBP1A</label>
    </interactant>
    <organismsDiffer>false</organismsDiffer>
    <experiments>3</experiments>
</comment>
<comment type="interaction">
    <interactant intactId="EBI-742887">
        <id>Q8TAP6</id>
    </interactant>
    <interactant intactId="EBI-10316460">
        <id>Q9NXN4</id>
        <label>GDAP2</label>
    </interactant>
    <organismsDiffer>false</organismsDiffer>
    <experiments>3</experiments>
</comment>
<comment type="interaction">
    <interactant intactId="EBI-742887">
        <id>Q8TAP6</id>
    </interactant>
    <interactant intactId="EBI-739467">
        <id>Q9H8Y8</id>
        <label>GORASP2</label>
    </interactant>
    <organismsDiffer>false</organismsDiffer>
    <experiments>3</experiments>
</comment>
<comment type="interaction">
    <interactant intactId="EBI-742887">
        <id>Q8TAP6</id>
    </interactant>
    <interactant intactId="EBI-2556750">
        <id>Q03933</id>
        <label>HSF2</label>
    </interactant>
    <organismsDiffer>false</organismsDiffer>
    <experiments>3</experiments>
</comment>
<comment type="interaction">
    <interactant intactId="EBI-742887">
        <id>Q8TAP6</id>
    </interactant>
    <interactant intactId="EBI-739361">
        <id>Q9UBY9</id>
        <label>HSPB7</label>
    </interactant>
    <organismsDiffer>false</organismsDiffer>
    <experiments>6</experiments>
</comment>
<comment type="interaction">
    <interactant intactId="EBI-742887">
        <id>Q8TAP6</id>
    </interactant>
    <interactant intactId="EBI-720553">
        <id>A1L0T0</id>
        <label>ILVBL</label>
    </interactant>
    <organismsDiffer>false</organismsDiffer>
    <experiments>3</experiments>
</comment>
<comment type="interaction">
    <interactant intactId="EBI-742887">
        <id>Q8TAP6</id>
    </interactant>
    <interactant intactId="EBI-10220600">
        <id>Q8NA54</id>
        <label>IQUB</label>
    </interactant>
    <organismsDiffer>false</organismsDiffer>
    <experiments>3</experiments>
</comment>
<comment type="interaction">
    <interactant intactId="EBI-742887">
        <id>Q8TAP6</id>
    </interactant>
    <interactant intactId="EBI-399080">
        <id>Q92993</id>
        <label>KAT5</label>
    </interactant>
    <organismsDiffer>false</organismsDiffer>
    <experiments>3</experiments>
</comment>
<comment type="interaction">
    <interactant intactId="EBI-742887">
        <id>Q8TAP6</id>
    </interactant>
    <interactant intactId="EBI-710124">
        <id>O60341</id>
        <label>KDM1A</label>
    </interactant>
    <organismsDiffer>false</organismsDiffer>
    <experiments>3</experiments>
</comment>
<comment type="interaction">
    <interactant intactId="EBI-742887">
        <id>Q8TAP6</id>
    </interactant>
    <interactant intactId="EBI-4311651">
        <id>Q6B0I6</id>
        <label>KDM4D</label>
    </interactant>
    <organismsDiffer>false</organismsDiffer>
    <experiments>3</experiments>
</comment>
<comment type="interaction">
    <interactant intactId="EBI-742887">
        <id>Q8TAP6</id>
    </interactant>
    <interactant intactId="EBI-11286926">
        <id>Q9BVV6</id>
        <label>KIAA0586</label>
    </interactant>
    <organismsDiffer>false</organismsDiffer>
    <experiments>2</experiments>
</comment>
<comment type="interaction">
    <interactant intactId="EBI-742887">
        <id>Q8TAP6</id>
    </interactant>
    <interactant intactId="EBI-2548425">
        <id>Q96AT1</id>
        <label>KIAA1143</label>
    </interactant>
    <organismsDiffer>false</organismsDiffer>
    <experiments>7</experiments>
</comment>
<comment type="interaction">
    <interactant intactId="EBI-742887">
        <id>Q8TAP6</id>
    </interactant>
    <interactant intactId="EBI-8472352">
        <id>Q8TBB5</id>
        <label>KLHDC4</label>
    </interactant>
    <organismsDiffer>false</organismsDiffer>
    <experiments>3</experiments>
</comment>
<comment type="interaction">
    <interactant intactId="EBI-742887">
        <id>Q8TAP6</id>
    </interactant>
    <interactant intactId="EBI-739909">
        <id>Q969R5</id>
        <label>L3MBTL2</label>
    </interactant>
    <organismsDiffer>false</organismsDiffer>
    <experiments>3</experiments>
</comment>
<comment type="interaction">
    <interactant intactId="EBI-742887">
        <id>Q8TAP6</id>
    </interactant>
    <interactant intactId="EBI-10253976">
        <id>Q6PJG3</id>
        <label>LATS1</label>
    </interactant>
    <organismsDiffer>false</organismsDiffer>
    <experiments>3</experiments>
</comment>
<comment type="interaction">
    <interactant intactId="EBI-742887">
        <id>Q8TAP6</id>
    </interactant>
    <interactant intactId="EBI-11742507">
        <id>Q8TAP4-4</id>
        <label>LMO3</label>
    </interactant>
    <organismsDiffer>false</organismsDiffer>
    <experiments>3</experiments>
</comment>
<comment type="interaction">
    <interactant intactId="EBI-742887">
        <id>Q8TAP6</id>
    </interactant>
    <interactant intactId="EBI-739832">
        <id>Q8TBB1</id>
        <label>LNX1</label>
    </interactant>
    <organismsDiffer>false</organismsDiffer>
    <experiments>3</experiments>
</comment>
<comment type="interaction">
    <interactant intactId="EBI-742887">
        <id>Q8TAP6</id>
    </interactant>
    <interactant intactId="EBI-1783068">
        <id>O95983</id>
        <label>MBD3</label>
    </interactant>
    <organismsDiffer>false</organismsDiffer>
    <experiments>3</experiments>
</comment>
<comment type="interaction">
    <interactant intactId="EBI-742887">
        <id>Q8TAP6</id>
    </interactant>
    <interactant intactId="EBI-11978579">
        <id>O95983-2</id>
        <label>MBD3</label>
    </interactant>
    <organismsDiffer>false</organismsDiffer>
    <experiments>3</experiments>
</comment>
<comment type="interaction">
    <interactant intactId="EBI-742887">
        <id>Q8TAP6</id>
    </interactant>
    <interactant intactId="EBI-1048159">
        <id>P55081</id>
        <label>MFAP1</label>
    </interactant>
    <organismsDiffer>false</organismsDiffer>
    <experiments>3</experiments>
</comment>
<comment type="interaction">
    <interactant intactId="EBI-742887">
        <id>Q8TAP6</id>
    </interactant>
    <interactant intactId="EBI-2555085">
        <id>Q8IVT2</id>
        <label>MISP</label>
    </interactant>
    <organismsDiffer>false</organismsDiffer>
    <experiments>3</experiments>
</comment>
<comment type="interaction">
    <interactant intactId="EBI-742887">
        <id>Q8TAP6</id>
    </interactant>
    <interactant intactId="EBI-744402">
        <id>Q9NP98</id>
        <label>MYOZ1</label>
    </interactant>
    <organismsDiffer>false</organismsDiffer>
    <experiments>3</experiments>
</comment>
<comment type="interaction">
    <interactant intactId="EBI-742887">
        <id>Q8TAP6</id>
    </interactant>
    <interactant intactId="EBI-11750983">
        <id>Q9HC98-4</id>
        <label>NEK6</label>
    </interactant>
    <organismsDiffer>false</organismsDiffer>
    <experiments>3</experiments>
</comment>
<comment type="interaction">
    <interactant intactId="EBI-742887">
        <id>Q8TAP6</id>
    </interactant>
    <interactant intactId="EBI-11956831">
        <id>Q13952-2</id>
        <label>NFYC</label>
    </interactant>
    <organismsDiffer>false</organismsDiffer>
    <experiments>3</experiments>
</comment>
<comment type="interaction">
    <interactant intactId="EBI-742887">
        <id>Q8TAP6</id>
    </interactant>
    <interactant intactId="EBI-10269163">
        <id>Q8NBF2</id>
        <label>NHLRC2</label>
    </interactant>
    <organismsDiffer>false</organismsDiffer>
    <experiments>3</experiments>
</comment>
<comment type="interaction">
    <interactant intactId="EBI-742887">
        <id>Q8TAP6</id>
    </interactant>
    <interactant intactId="EBI-10697320">
        <id>Q8NBF2-2</id>
        <label>NHLRC2</label>
    </interactant>
    <organismsDiffer>false</organismsDiffer>
    <experiments>3</experiments>
</comment>
<comment type="interaction">
    <interactant intactId="EBI-742887">
        <id>Q8TAP6</id>
    </interactant>
    <interactant intactId="EBI-16430544">
        <id>A0A0S2Z4M0</id>
        <label>NME5</label>
    </interactant>
    <organismsDiffer>false</organismsDiffer>
    <experiments>4</experiments>
</comment>
<comment type="interaction">
    <interactant intactId="EBI-742887">
        <id>Q8TAP6</id>
    </interactant>
    <interactant intactId="EBI-395883">
        <id>P07237</id>
        <label>P4HB</label>
    </interactant>
    <organismsDiffer>false</organismsDiffer>
    <experiments>3</experiments>
</comment>
<comment type="interaction">
    <interactant intactId="EBI-742887">
        <id>Q8TAP6</id>
    </interactant>
    <interactant intactId="EBI-295391">
        <id>Q9BYG5</id>
        <label>PARD6B</label>
    </interactant>
    <organismsDiffer>false</organismsDiffer>
    <experiments>6</experiments>
</comment>
<comment type="interaction">
    <interactant intactId="EBI-742887">
        <id>Q8TAP6</id>
    </interactant>
    <interactant intactId="EBI-11022007">
        <id>Q9HBE1-4</id>
        <label>PATZ1</label>
    </interactant>
    <organismsDiffer>false</organismsDiffer>
    <experiments>3</experiments>
</comment>
<comment type="interaction">
    <interactant intactId="EBI-742887">
        <id>Q8TAP6</id>
    </interactant>
    <interactant intactId="EBI-641237">
        <id>P09619</id>
        <label>PDGFRB</label>
    </interactant>
    <organismsDiffer>false</organismsDiffer>
    <experiments>3</experiments>
</comment>
<comment type="interaction">
    <interactant intactId="EBI-742887">
        <id>Q8TAP6</id>
    </interactant>
    <interactant intactId="EBI-307050">
        <id>Q9NUG6</id>
        <label>PDRG1</label>
    </interactant>
    <organismsDiffer>false</organismsDiffer>
    <experiments>3</experiments>
</comment>
<comment type="interaction">
    <interactant intactId="EBI-742887">
        <id>Q8TAP6</id>
    </interactant>
    <interactant intactId="EBI-10239064">
        <id>Q17RL8</id>
        <label>PDZD4</label>
    </interactant>
    <organismsDiffer>false</organismsDiffer>
    <experiments>3</experiments>
</comment>
<comment type="interaction">
    <interactant intactId="EBI-742887">
        <id>Q8TAP6</id>
    </interactant>
    <interactant intactId="EBI-714158">
        <id>Q13526</id>
        <label>PIN1</label>
    </interactant>
    <organismsDiffer>false</organismsDiffer>
    <experiments>6</experiments>
</comment>
<comment type="interaction">
    <interactant intactId="EBI-742887">
        <id>Q8TAP6</id>
    </interactant>
    <interactant intactId="EBI-9087684">
        <id>Q13835-2</id>
        <label>PKP1</label>
    </interactant>
    <organismsDiffer>false</organismsDiffer>
    <experiments>3</experiments>
</comment>
<comment type="interaction">
    <interactant intactId="EBI-742887">
        <id>Q8TAP6</id>
    </interactant>
    <interactant intactId="EBI-12089905">
        <id>O60733</id>
        <label>PLA2G6</label>
    </interactant>
    <organismsDiffer>false</organismsDiffer>
    <experiments>3</experiments>
</comment>
<comment type="interaction">
    <interactant intactId="EBI-742887">
        <id>Q8TAP6</id>
    </interactant>
    <interactant intactId="EBI-3396023">
        <id>Q9NQ66</id>
        <label>PLCB1</label>
    </interactant>
    <organismsDiffer>false</organismsDiffer>
    <experiments>3</experiments>
</comment>
<comment type="interaction">
    <interactant intactId="EBI-742887">
        <id>Q8TAP6</id>
    </interactant>
    <interactant intactId="EBI-739990">
        <id>Q96HA1</id>
        <label>POM121</label>
    </interactant>
    <organismsDiffer>false</organismsDiffer>
    <experiments>3</experiments>
</comment>
<comment type="interaction">
    <interactant intactId="EBI-742887">
        <id>Q8TAP6</id>
    </interactant>
    <interactant intactId="EBI-11956563">
        <id>Q96HA1-2</id>
        <label>POM121</label>
    </interactant>
    <organismsDiffer>false</organismsDiffer>
    <experiments>3</experiments>
</comment>
<comment type="interaction">
    <interactant intactId="EBI-742887">
        <id>Q8TAP6</id>
    </interactant>
    <interactant intactId="EBI-25884072">
        <id>P62937-2</id>
        <label>PPIA</label>
    </interactant>
    <organismsDiffer>false</organismsDiffer>
    <experiments>3</experiments>
</comment>
<comment type="interaction">
    <interactant intactId="EBI-742887">
        <id>Q8TAP6</id>
    </interactant>
    <interactant intactId="EBI-744267">
        <id>Q96JH8</id>
        <label>RADIL</label>
    </interactant>
    <organismsDiffer>false</organismsDiffer>
    <experiments>3</experiments>
</comment>
<comment type="interaction">
    <interactant intactId="EBI-742887">
        <id>Q8TAP6</id>
    </interactant>
    <interactant intactId="EBI-12217281">
        <id>Q5JS13-3</id>
        <label>RALGPS1</label>
    </interactant>
    <organismsDiffer>false</organismsDiffer>
    <experiments>3</experiments>
</comment>
<comment type="interaction">
    <interactant intactId="EBI-742887">
        <id>Q8TAP6</id>
    </interactant>
    <interactant intactId="EBI-740773">
        <id>Q96IZ5</id>
        <label>RBM41</label>
    </interactant>
    <organismsDiffer>false</organismsDiffer>
    <experiments>3</experiments>
</comment>
<comment type="interaction">
    <interactant intactId="EBI-742887">
        <id>Q8TAP6</id>
    </interactant>
    <interactant intactId="EBI-12092053">
        <id>P57055</id>
        <label>RIPPLY3</label>
    </interactant>
    <organismsDiffer>false</organismsDiffer>
    <experiments>3</experiments>
</comment>
<comment type="interaction">
    <interactant intactId="EBI-742887">
        <id>Q8TAP6</id>
    </interactant>
    <interactant intactId="EBI-2341619">
        <id>Q8TEB7</id>
        <label>RNF128</label>
    </interactant>
    <organismsDiffer>false</organismsDiffer>
    <experiments>6</experiments>
</comment>
<comment type="interaction">
    <interactant intactId="EBI-742887">
        <id>Q8TAP6</id>
    </interactant>
    <interactant intactId="EBI-358122">
        <id>P32969</id>
        <label>RPL9P9</label>
    </interactant>
    <organismsDiffer>false</organismsDiffer>
    <experiments>8</experiments>
</comment>
<comment type="interaction">
    <interactant intactId="EBI-742887">
        <id>Q8TAP6</id>
    </interactant>
    <interactant intactId="EBI-746180">
        <id>Q9Y467</id>
        <label>SALL2</label>
    </interactant>
    <organismsDiffer>false</organismsDiffer>
    <experiments>4</experiments>
</comment>
<comment type="interaction">
    <interactant intactId="EBI-742887">
        <id>Q8TAP6</id>
    </interactant>
    <interactant intactId="EBI-748391">
        <id>Q9BWG6</id>
        <label>SCNM1</label>
    </interactant>
    <organismsDiffer>false</organismsDiffer>
    <experiments>3</experiments>
</comment>
<comment type="interaction">
    <interactant intactId="EBI-742887">
        <id>Q8TAP6</id>
    </interactant>
    <interactant intactId="EBI-9090795">
        <id>Q15047-2</id>
        <label>SETDB1</label>
    </interactant>
    <organismsDiffer>false</organismsDiffer>
    <experiments>3</experiments>
</comment>
<comment type="interaction">
    <interactant intactId="EBI-742887">
        <id>Q8TAP6</id>
    </interactant>
    <interactant intactId="EBI-747035">
        <id>Q9H788</id>
        <label>SH2D4A</label>
    </interactant>
    <organismsDiffer>false</organismsDiffer>
    <experiments>3</experiments>
</comment>
<comment type="interaction">
    <interactant intactId="EBI-742887">
        <id>Q8TAP6</id>
    </interactant>
    <interactant intactId="EBI-2872322">
        <id>Q9H0W8</id>
        <label>SMG9</label>
    </interactant>
    <organismsDiffer>false</organismsDiffer>
    <experiments>3</experiments>
</comment>
<comment type="interaction">
    <interactant intactId="EBI-742887">
        <id>Q8TAP6</id>
    </interactant>
    <interactant intactId="EBI-742688">
        <id>Q9NZD8</id>
        <label>SPG21</label>
    </interactant>
    <organismsDiffer>false</organismsDiffer>
    <experiments>3</experiments>
</comment>
<comment type="interaction">
    <interactant intactId="EBI-742887">
        <id>Q8TAP6</id>
    </interactant>
    <interactant intactId="EBI-3921347">
        <id>P51687</id>
        <label>SUOX</label>
    </interactant>
    <organismsDiffer>false</organismsDiffer>
    <experiments>3</experiments>
</comment>
<comment type="interaction">
    <interactant intactId="EBI-742887">
        <id>Q8TAP6</id>
    </interactant>
    <interactant intactId="EBI-710310">
        <id>Q15560</id>
        <label>TCEA2</label>
    </interactant>
    <organismsDiffer>false</organismsDiffer>
    <experiments>3</experiments>
</comment>
<comment type="interaction">
    <interactant intactId="EBI-742887">
        <id>Q8TAP6</id>
    </interactant>
    <interactant intactId="EBI-11955057">
        <id>Q8N8B7-2</id>
        <label>TCEANC</label>
    </interactant>
    <organismsDiffer>false</organismsDiffer>
    <experiments>3</experiments>
</comment>
<comment type="interaction">
    <interactant intactId="EBI-742887">
        <id>Q8TAP6</id>
    </interactant>
    <interactant intactId="EBI-7413767">
        <id>Q9Y242</id>
        <label>TCF19</label>
    </interactant>
    <organismsDiffer>false</organismsDiffer>
    <experiments>3</experiments>
</comment>
<comment type="interaction">
    <interactant intactId="EBI-742887">
        <id>Q8TAP6</id>
    </interactant>
    <interactant intactId="EBI-11952651">
        <id>Q7Z6R9</id>
        <label>TFAP2D</label>
    </interactant>
    <organismsDiffer>false</organismsDiffer>
    <experiments>3</experiments>
</comment>
<comment type="interaction">
    <interactant intactId="EBI-742887">
        <id>Q8TAP6</id>
    </interactant>
    <interactant intactId="EBI-286285">
        <id>P10827</id>
        <label>THRA</label>
    </interactant>
    <organismsDiffer>false</organismsDiffer>
    <experiments>4</experiments>
</comment>
<comment type="interaction">
    <interactant intactId="EBI-742887">
        <id>Q8TAP6</id>
    </interactant>
    <interactant intactId="EBI-2562000">
        <id>Q14106</id>
        <label>TOB2</label>
    </interactant>
    <organismsDiffer>false</organismsDiffer>
    <experiments>3</experiments>
</comment>
<comment type="interaction">
    <interactant intactId="EBI-742887">
        <id>Q8TAP6</id>
    </interactant>
    <interactant intactId="EBI-717229">
        <id>Q9Y5U2</id>
        <label>TSSC4</label>
    </interactant>
    <organismsDiffer>false</organismsDiffer>
    <experiments>3</experiments>
</comment>
<comment type="interaction">
    <interactant intactId="EBI-742887">
        <id>Q8TAP6</id>
    </interactant>
    <interactant intactId="EBI-10220701">
        <id>A0A0B4J1Y2</id>
        <label>TTC21A</label>
    </interactant>
    <organismsDiffer>false</organismsDiffer>
    <experiments>6</experiments>
</comment>
<comment type="interaction">
    <interactant intactId="EBI-742887">
        <id>Q8TAP6</id>
    </interactant>
    <interactant intactId="EBI-11979997">
        <id>Q6ZVT0-3</id>
        <label>TTLL10</label>
    </interactant>
    <organismsDiffer>false</organismsDiffer>
    <experiments>3</experiments>
</comment>
<comment type="interaction">
    <interactant intactId="EBI-742887">
        <id>Q8TAP6</id>
    </interactant>
    <interactant intactId="EBI-2557363">
        <id>Q9NNX1</id>
        <label>TUFT1</label>
    </interactant>
    <organismsDiffer>false</organismsDiffer>
    <experiments>3</experiments>
</comment>
<comment type="interaction">
    <interactant intactId="EBI-742887">
        <id>Q8TAP6</id>
    </interactant>
    <interactant intactId="EBI-707554">
        <id>O14530</id>
        <label>TXNDC9</label>
    </interactant>
    <organismsDiffer>false</organismsDiffer>
    <experiments>3</experiments>
</comment>
<comment type="interaction">
    <interactant intactId="EBI-742887">
        <id>Q8TAP6</id>
    </interactant>
    <interactant intactId="EBI-11980193">
        <id>Q14119</id>
        <label>VEZF1</label>
    </interactant>
    <organismsDiffer>false</organismsDiffer>
    <experiments>3</experiments>
</comment>
<comment type="interaction">
    <interactant intactId="EBI-742887">
        <id>Q8TAP6</id>
    </interactant>
    <interactant intactId="EBI-10264625">
        <id>Q8IZQ1-2</id>
        <label>WDFY3</label>
    </interactant>
    <organismsDiffer>false</organismsDiffer>
    <experiments>3</experiments>
</comment>
<comment type="interaction">
    <interactant intactId="EBI-742887">
        <id>Q8TAP6</id>
    </interactant>
    <interactant intactId="EBI-359832">
        <id>P61981</id>
        <label>YWHAG</label>
    </interactant>
    <organismsDiffer>false</organismsDiffer>
    <experiments>3</experiments>
</comment>
<comment type="interaction">
    <interactant intactId="EBI-742887">
        <id>Q8TAP6</id>
    </interactant>
    <interactant intactId="EBI-765538">
        <id>P25490</id>
        <label>YY1</label>
    </interactant>
    <organismsDiffer>false</organismsDiffer>
    <experiments>3</experiments>
</comment>
<comment type="interaction">
    <interactant intactId="EBI-742887">
        <id>Q8TAP6</id>
    </interactant>
    <interactant intactId="EBI-744471">
        <id>O43167</id>
        <label>ZBTB24</label>
    </interactant>
    <organismsDiffer>false</organismsDiffer>
    <experiments>6</experiments>
</comment>
<comment type="interaction">
    <interactant intactId="EBI-742887">
        <id>Q8TAP6</id>
    </interactant>
    <interactant intactId="EBI-2564133">
        <id>Q9P1Z0</id>
        <label>ZBTB4</label>
    </interactant>
    <organismsDiffer>false</organismsDiffer>
    <experiments>3</experiments>
</comment>
<comment type="interaction">
    <interactant intactId="EBI-742887">
        <id>Q8TAP6</id>
    </interactant>
    <interactant intactId="EBI-2682299">
        <id>Q96NC0</id>
        <label>ZMAT2</label>
    </interactant>
    <organismsDiffer>false</organismsDiffer>
    <experiments>3</experiments>
</comment>
<comment type="interaction">
    <interactant intactId="EBI-742887">
        <id>Q8TAP6</id>
    </interactant>
    <interactant intactId="EBI-6874731">
        <id>O15231</id>
        <label>ZNF185</label>
    </interactant>
    <organismsDiffer>false</organismsDiffer>
    <experiments>3</experiments>
</comment>
<comment type="interaction">
    <interactant intactId="EBI-742887">
        <id>Q8TAP6</id>
    </interactant>
    <interactant intactId="EBI-12217757">
        <id>Q96CK0</id>
        <label>ZNF653</label>
    </interactant>
    <organismsDiffer>false</organismsDiffer>
    <experiments>3</experiments>
</comment>
<comment type="interaction">
    <interactant intactId="EBI-742887">
        <id>Q8TAP6</id>
    </interactant>
    <interactant intactId="EBI-7254550">
        <id>P36508</id>
        <label>ZNF76</label>
    </interactant>
    <organismsDiffer>false</organismsDiffer>
    <experiments>3</experiments>
</comment>
<comment type="interaction">
    <interactant intactId="EBI-742887">
        <id>Q8TAP6</id>
    </interactant>
    <interactant intactId="EBI-10223330">
        <id>Q03923-3</id>
        <label>ZNF85</label>
    </interactant>
    <organismsDiffer>false</organismsDiffer>
    <experiments>3</experiments>
</comment>
<comment type="subcellular location">
    <subcellularLocation>
        <location evidence="2">Cytoplasm</location>
        <location evidence="2">Cytoskeleton</location>
        <location evidence="2">Microtubule organizing center</location>
        <location evidence="2">Centrosome</location>
    </subcellularLocation>
    <subcellularLocation>
        <location>Cytoplasm</location>
        <location>Cytoskeleton</location>
        <location>Microtubule organizing center</location>
        <location>Centrosome</location>
        <location>Centriole</location>
    </subcellularLocation>
    <text>Does not localize along the ciliary axoneme.</text>
</comment>
<comment type="alternative products">
    <event type="alternative splicing"/>
    <isoform>
        <id>Q8TAP6-1</id>
        <name>1</name>
        <sequence type="displayed"/>
    </isoform>
    <isoform>
        <id>Q8TAP6-2</id>
        <name>2</name>
        <sequence type="described" ref="VSP_037611"/>
    </isoform>
    <isoform>
        <id>Q8TAP6-3</id>
        <name>3</name>
        <sequence type="described" ref="VSP_037610 VSP_037612 VSP_037613"/>
    </isoform>
</comment>
<comment type="developmental stage">
    <text evidence="3">Expressed at low level in G1 and is induced in S and G2 phase, during which point centrioles have already commenced duplication (at protein level).</text>
</comment>
<comment type="similarity">
    <text evidence="5">Belongs to the CEP76 family.</text>
</comment>
<comment type="sequence caution" evidence="5">
    <conflict type="erroneous termination">
        <sequence resource="EMBL-CDS" id="BAG64223"/>
    </conflict>
    <text>Truncated C-terminus.</text>
</comment>
<protein>
    <recommendedName>
        <fullName>Centrosomal protein of 76 kDa</fullName>
        <shortName>Cep76</shortName>
    </recommendedName>
</protein>
<feature type="chain" id="PRO_0000089501" description="Centrosomal protein of 76 kDa">
    <location>
        <begin position="1"/>
        <end position="659"/>
    </location>
</feature>
<feature type="modified residue" description="Phosphoserine" evidence="1">
    <location>
        <position position="75"/>
    </location>
</feature>
<feature type="modified residue" description="Phosphoserine" evidence="6 7">
    <location>
        <position position="83"/>
    </location>
</feature>
<feature type="splice variant" id="VSP_037610" description="In isoform 3." evidence="4">
    <location>
        <begin position="1"/>
        <end position="178"/>
    </location>
</feature>
<feature type="splice variant" id="VSP_037611" description="In isoform 2." evidence="4">
    <original>TNIDPTRRYLYLQVLGGKAFLEHLQEPEPLPGQVCSTFTLCLHYRNQRFRSKPVPCACEPDFHDGFLLEVHRESLG</original>
    <variation>S</variation>
    <location>
        <begin position="99"/>
        <end position="174"/>
    </location>
</feature>
<feature type="splice variant" id="VSP_037612" description="In isoform 3." evidence="4">
    <original>YIHKPTNPDEPPVAE</original>
    <variation>LCFQPSDVPGKLSTL</variation>
    <location>
        <begin position="431"/>
        <end position="445"/>
    </location>
</feature>
<feature type="splice variant" id="VSP_037613" description="In isoform 3." evidence="4">
    <location>
        <begin position="446"/>
        <end position="659"/>
    </location>
</feature>
<feature type="sequence conflict" description="In Ref. 1; BAB14123." evidence="5" ref="1">
    <original>N</original>
    <variation>S</variation>
    <location>
        <position position="314"/>
    </location>
</feature>
<feature type="sequence conflict" description="In Ref. 1; BAB14123." evidence="5" ref="1">
    <original>R</original>
    <variation>G</variation>
    <location>
        <position position="606"/>
    </location>
</feature>
<sequence>MSLPPEKASELKQLIHQQLSKMDVHGRIREILAETIREELAPDQQHLSTEDLIKALRRRGIIDDVMKELNFVTDSVEQELPSSPKQPICFDRQSTLKKTNIDPTRRYLYLQVLGGKAFLEHLQEPEPLPGQVCSTFTLCLHYRNQRFRSKPVPCACEPDFHDGFLLEVHRESLGDGTRMADSTTMLSISDPIHMVLIKTDIFGETTLVASYFLEWRSVLGSENGVTSLTVELMGVGTESKVSVGILNIKLEMYPPLNQTLSQEVVNTQLALERQKTAEKERLFLVYAKQWWREYLQIRPSHNSRLVKIFAQDENGINRPVCSYVKPLRAGRLLDTPRQAARFVNVLGYERAPVIGGGGKQEQWCTLLAFLCRNKGDCEDHANLLCSLLLGYGLEAFVCVGTKAKGVPHAWVMTCGTDGAITFWESLTGHRYIHKPTNPDEPPVAEQPKPLYPYRTIGCVFNHQMFLGNCQPSDAVETCVFDLNDESKWKPMSEEAIKSVCAPGATTSLPPFPPLCASTIDASVTSNEIEMQLRLLVSEHRKDLGLTTVWEDQLSYLLSPALASYEFERTTSISAGNEEFQDAIRRAVPDGHTFKGFPIHFVYRNARRAFATCLRSPFCEEIICCRGDQVRLAVRVRVFTYPESACAVWIMFACKYRSVL</sequence>
<accession>Q8TAP6</accession>
<accession>B0YJB2</accession>
<accession>B4DXG5</accession>
<accession>B4DZW1</accession>
<accession>Q658N5</accession>
<accession>Q9H9U7</accession>
<keyword id="KW-0025">Alternative splicing</keyword>
<keyword id="KW-0963">Cytoplasm</keyword>
<keyword id="KW-0206">Cytoskeleton</keyword>
<keyword id="KW-0597">Phosphoprotein</keyword>
<keyword id="KW-1267">Proteomics identification</keyword>
<keyword id="KW-1185">Reference proteome</keyword>
<dbReference type="EMBL" id="AK022604">
    <property type="protein sequence ID" value="BAB14123.1"/>
    <property type="molecule type" value="mRNA"/>
</dbReference>
<dbReference type="EMBL" id="AK301964">
    <property type="protein sequence ID" value="BAG63377.1"/>
    <property type="molecule type" value="mRNA"/>
</dbReference>
<dbReference type="EMBL" id="AK303117">
    <property type="protein sequence ID" value="BAG64223.1"/>
    <property type="status" value="ALT_SEQ"/>
    <property type="molecule type" value="mRNA"/>
</dbReference>
<dbReference type="EMBL" id="EF445040">
    <property type="protein sequence ID" value="ACA06091.1"/>
    <property type="molecule type" value="Genomic_DNA"/>
</dbReference>
<dbReference type="EMBL" id="AP005482">
    <property type="status" value="NOT_ANNOTATED_CDS"/>
    <property type="molecule type" value="Genomic_DNA"/>
</dbReference>
<dbReference type="EMBL" id="CH471113">
    <property type="protein sequence ID" value="EAX01543.1"/>
    <property type="molecule type" value="Genomic_DNA"/>
</dbReference>
<dbReference type="EMBL" id="BC026307">
    <property type="protein sequence ID" value="AAH26307.1"/>
    <property type="molecule type" value="mRNA"/>
</dbReference>
<dbReference type="EMBL" id="AL833727">
    <property type="protein sequence ID" value="CAH56252.1"/>
    <property type="molecule type" value="mRNA"/>
</dbReference>
<dbReference type="CCDS" id="CCDS11861.1">
    <molecule id="Q8TAP6-1"/>
</dbReference>
<dbReference type="CCDS" id="CCDS62390.1">
    <molecule id="Q8TAP6-2"/>
</dbReference>
<dbReference type="RefSeq" id="NP_001258918.1">
    <molecule id="Q8TAP6-2"/>
    <property type="nucleotide sequence ID" value="NM_001271989.2"/>
</dbReference>
<dbReference type="RefSeq" id="NP_079175.2">
    <molecule id="Q8TAP6-1"/>
    <property type="nucleotide sequence ID" value="NM_024899.3"/>
</dbReference>
<dbReference type="SMR" id="Q8TAP6"/>
<dbReference type="BioGRID" id="123028">
    <property type="interactions" value="239"/>
</dbReference>
<dbReference type="FunCoup" id="Q8TAP6">
    <property type="interactions" value="1319"/>
</dbReference>
<dbReference type="IntAct" id="Q8TAP6">
    <property type="interactions" value="136"/>
</dbReference>
<dbReference type="MINT" id="Q8TAP6"/>
<dbReference type="STRING" id="9606.ENSP00000262127"/>
<dbReference type="iPTMnet" id="Q8TAP6"/>
<dbReference type="PhosphoSitePlus" id="Q8TAP6"/>
<dbReference type="SwissPalm" id="Q8TAP6"/>
<dbReference type="BioMuta" id="CEP76"/>
<dbReference type="DMDM" id="59797956"/>
<dbReference type="jPOST" id="Q8TAP6"/>
<dbReference type="MassIVE" id="Q8TAP6"/>
<dbReference type="PaxDb" id="9606-ENSP00000262127"/>
<dbReference type="PeptideAtlas" id="Q8TAP6"/>
<dbReference type="ProteomicsDB" id="73901">
    <molecule id="Q8TAP6-1"/>
</dbReference>
<dbReference type="ProteomicsDB" id="73902">
    <molecule id="Q8TAP6-2"/>
</dbReference>
<dbReference type="ProteomicsDB" id="73903">
    <molecule id="Q8TAP6-3"/>
</dbReference>
<dbReference type="Pumba" id="Q8TAP6"/>
<dbReference type="Antibodypedia" id="21948">
    <property type="antibodies" value="149 antibodies from 23 providers"/>
</dbReference>
<dbReference type="DNASU" id="79959"/>
<dbReference type="Ensembl" id="ENST00000262127.7">
    <molecule id="Q8TAP6-1"/>
    <property type="protein sequence ID" value="ENSP00000262127.2"/>
    <property type="gene ID" value="ENSG00000101624.11"/>
</dbReference>
<dbReference type="Ensembl" id="ENST00000423709.6">
    <molecule id="Q8TAP6-2"/>
    <property type="protein sequence ID" value="ENSP00000403074.1"/>
    <property type="gene ID" value="ENSG00000101624.11"/>
</dbReference>
<dbReference type="GeneID" id="79959"/>
<dbReference type="KEGG" id="hsa:79959"/>
<dbReference type="MANE-Select" id="ENST00000262127.7">
    <property type="protein sequence ID" value="ENSP00000262127.2"/>
    <property type="RefSeq nucleotide sequence ID" value="NM_024899.4"/>
    <property type="RefSeq protein sequence ID" value="NP_079175.2"/>
</dbReference>
<dbReference type="UCSC" id="uc002kri.5">
    <molecule id="Q8TAP6-1"/>
    <property type="organism name" value="human"/>
</dbReference>
<dbReference type="AGR" id="HGNC:25727"/>
<dbReference type="CTD" id="79959"/>
<dbReference type="DisGeNET" id="79959"/>
<dbReference type="GeneCards" id="CEP76"/>
<dbReference type="HGNC" id="HGNC:25727">
    <property type="gene designation" value="CEP76"/>
</dbReference>
<dbReference type="HPA" id="ENSG00000101624">
    <property type="expression patterns" value="Low tissue specificity"/>
</dbReference>
<dbReference type="MIM" id="620791">
    <property type="type" value="gene"/>
</dbReference>
<dbReference type="neXtProt" id="NX_Q8TAP6"/>
<dbReference type="OpenTargets" id="ENSG00000101624"/>
<dbReference type="PharmGKB" id="PA134916911"/>
<dbReference type="VEuPathDB" id="HostDB:ENSG00000101624"/>
<dbReference type="eggNOG" id="ENOG502QQEI">
    <property type="taxonomic scope" value="Eukaryota"/>
</dbReference>
<dbReference type="GeneTree" id="ENSGT00390000000781"/>
<dbReference type="HOGENOM" id="CLU_027144_0_0_1"/>
<dbReference type="InParanoid" id="Q8TAP6"/>
<dbReference type="OMA" id="RRWWSEY"/>
<dbReference type="OrthoDB" id="5527234at2759"/>
<dbReference type="PAN-GO" id="Q8TAP6">
    <property type="GO annotations" value="2 GO annotations based on evolutionary models"/>
</dbReference>
<dbReference type="PhylomeDB" id="Q8TAP6"/>
<dbReference type="TreeFam" id="TF329324"/>
<dbReference type="PathwayCommons" id="Q8TAP6"/>
<dbReference type="Reactome" id="R-HSA-2565942">
    <property type="pathway name" value="Regulation of PLK1 Activity at G2/M Transition"/>
</dbReference>
<dbReference type="Reactome" id="R-HSA-380259">
    <property type="pathway name" value="Loss of Nlp from mitotic centrosomes"/>
</dbReference>
<dbReference type="Reactome" id="R-HSA-380270">
    <property type="pathway name" value="Recruitment of mitotic centrosome proteins and complexes"/>
</dbReference>
<dbReference type="Reactome" id="R-HSA-380284">
    <property type="pathway name" value="Loss of proteins required for interphase microtubule organization from the centrosome"/>
</dbReference>
<dbReference type="Reactome" id="R-HSA-380320">
    <property type="pathway name" value="Recruitment of NuMA to mitotic centrosomes"/>
</dbReference>
<dbReference type="Reactome" id="R-HSA-5620912">
    <property type="pathway name" value="Anchoring of the basal body to the plasma membrane"/>
</dbReference>
<dbReference type="Reactome" id="R-HSA-8854518">
    <property type="pathway name" value="AURKA Activation by TPX2"/>
</dbReference>
<dbReference type="SignaLink" id="Q8TAP6"/>
<dbReference type="SIGNOR" id="Q8TAP6"/>
<dbReference type="BioGRID-ORCS" id="79959">
    <property type="hits" value="14 hits in 1157 CRISPR screens"/>
</dbReference>
<dbReference type="CD-CODE" id="8C2F96ED">
    <property type="entry name" value="Centrosome"/>
</dbReference>
<dbReference type="ChiTaRS" id="CEP76">
    <property type="organism name" value="human"/>
</dbReference>
<dbReference type="GeneWiki" id="CEP76"/>
<dbReference type="GenomeRNAi" id="79959"/>
<dbReference type="Pharos" id="Q8TAP6">
    <property type="development level" value="Tdark"/>
</dbReference>
<dbReference type="PRO" id="PR:Q8TAP6"/>
<dbReference type="Proteomes" id="UP000005640">
    <property type="component" value="Chromosome 18"/>
</dbReference>
<dbReference type="RNAct" id="Q8TAP6">
    <property type="molecule type" value="protein"/>
</dbReference>
<dbReference type="Bgee" id="ENSG00000101624">
    <property type="expression patterns" value="Expressed in secondary oocyte and 165 other cell types or tissues"/>
</dbReference>
<dbReference type="ExpressionAtlas" id="Q8TAP6">
    <property type="expression patterns" value="baseline and differential"/>
</dbReference>
<dbReference type="GO" id="GO:0005814">
    <property type="term" value="C:centriole"/>
    <property type="evidence" value="ECO:0000314"/>
    <property type="project" value="UniProtKB"/>
</dbReference>
<dbReference type="GO" id="GO:0005813">
    <property type="term" value="C:centrosome"/>
    <property type="evidence" value="ECO:0000314"/>
    <property type="project" value="UniProtKB"/>
</dbReference>
<dbReference type="GO" id="GO:0005829">
    <property type="term" value="C:cytosol"/>
    <property type="evidence" value="ECO:0000304"/>
    <property type="project" value="Reactome"/>
</dbReference>
<dbReference type="GO" id="GO:0032991">
    <property type="term" value="C:protein-containing complex"/>
    <property type="evidence" value="ECO:0000314"/>
    <property type="project" value="MGI"/>
</dbReference>
<dbReference type="GO" id="GO:0046599">
    <property type="term" value="P:regulation of centriole replication"/>
    <property type="evidence" value="ECO:0000315"/>
    <property type="project" value="UniProtKB"/>
</dbReference>
<dbReference type="FunFam" id="3.10.620.30:FF:000003">
    <property type="entry name" value="Centrosomal protein of 76 kDa"/>
    <property type="match status" value="1"/>
</dbReference>
<dbReference type="Gene3D" id="3.10.620.30">
    <property type="match status" value="1"/>
</dbReference>
<dbReference type="InterPro" id="IPR052299">
    <property type="entry name" value="CEP76"/>
</dbReference>
<dbReference type="InterPro" id="IPR028926">
    <property type="entry name" value="CEP76-C2"/>
</dbReference>
<dbReference type="InterPro" id="IPR056288">
    <property type="entry name" value="CEP76_C"/>
</dbReference>
<dbReference type="InterPro" id="IPR056289">
    <property type="entry name" value="CEP76_N"/>
</dbReference>
<dbReference type="InterPro" id="IPR056290">
    <property type="entry name" value="CEPT76/DRC7_peptidase-like_dom"/>
</dbReference>
<dbReference type="InterPro" id="IPR038765">
    <property type="entry name" value="Papain-like_cys_pep_sf"/>
</dbReference>
<dbReference type="PANTHER" id="PTHR46436">
    <property type="entry name" value="CENTROSOMAL PROTEIN OF 76 KDA"/>
    <property type="match status" value="1"/>
</dbReference>
<dbReference type="PANTHER" id="PTHR46436:SF1">
    <property type="entry name" value="CENTROSOMAL PROTEIN OF 76 KDA"/>
    <property type="match status" value="1"/>
</dbReference>
<dbReference type="Pfam" id="PF15627">
    <property type="entry name" value="CEP76-C2"/>
    <property type="match status" value="1"/>
</dbReference>
<dbReference type="Pfam" id="PF24652">
    <property type="entry name" value="CEP76_C"/>
    <property type="match status" value="1"/>
</dbReference>
<dbReference type="Pfam" id="PF24654">
    <property type="entry name" value="CEP76_N"/>
    <property type="match status" value="1"/>
</dbReference>
<dbReference type="Pfam" id="PF24656">
    <property type="entry name" value="CEPT76_peptidase"/>
    <property type="match status" value="1"/>
</dbReference>
<dbReference type="SUPFAM" id="SSF54001">
    <property type="entry name" value="Cysteine proteinases"/>
    <property type="match status" value="1"/>
</dbReference>
<gene>
    <name type="primary">CEP76</name>
    <name type="synonym">C18orf9</name>
</gene>